<reference key="1">
    <citation type="journal article" date="2006" name="Nat. Biotechnol.">
        <title>Complete genome sequence of the entomopathogenic and metabolically versatile soil bacterium Pseudomonas entomophila.</title>
        <authorList>
            <person name="Vodovar N."/>
            <person name="Vallenet D."/>
            <person name="Cruveiller S."/>
            <person name="Rouy Z."/>
            <person name="Barbe V."/>
            <person name="Acosta C."/>
            <person name="Cattolico L."/>
            <person name="Jubin C."/>
            <person name="Lajus A."/>
            <person name="Segurens B."/>
            <person name="Vacherie B."/>
            <person name="Wincker P."/>
            <person name="Weissenbach J."/>
            <person name="Lemaitre B."/>
            <person name="Medigue C."/>
            <person name="Boccard F."/>
        </authorList>
    </citation>
    <scope>NUCLEOTIDE SEQUENCE [LARGE SCALE GENOMIC DNA]</scope>
    <source>
        <strain>L48</strain>
    </source>
</reference>
<comment type="similarity">
    <text evidence="1">Belongs to the UPF0250 family.</text>
</comment>
<sequence>MSEEDVKSHKIEFPCEDYPIKVIGDTVVGFRDTVIEILSKHAKVDLSTLAERQSKEGKYTTVQLHIVAESENQLHDINSALRATGIVKMVL</sequence>
<feature type="chain" id="PRO_1000061880" description="UPF0250 protein PSEEN4821">
    <location>
        <begin position="1"/>
        <end position="91"/>
    </location>
</feature>
<proteinExistence type="inferred from homology"/>
<protein>
    <recommendedName>
        <fullName evidence="1">UPF0250 protein PSEEN4821</fullName>
    </recommendedName>
</protein>
<accession>Q1I4F9</accession>
<name>Y4821_PSEE4</name>
<evidence type="ECO:0000255" key="1">
    <source>
        <dbReference type="HAMAP-Rule" id="MF_00659"/>
    </source>
</evidence>
<gene>
    <name type="ordered locus">PSEEN4821</name>
</gene>
<organism>
    <name type="scientific">Pseudomonas entomophila (strain L48)</name>
    <dbReference type="NCBI Taxonomy" id="384676"/>
    <lineage>
        <taxon>Bacteria</taxon>
        <taxon>Pseudomonadati</taxon>
        <taxon>Pseudomonadota</taxon>
        <taxon>Gammaproteobacteria</taxon>
        <taxon>Pseudomonadales</taxon>
        <taxon>Pseudomonadaceae</taxon>
        <taxon>Pseudomonas</taxon>
    </lineage>
</organism>
<dbReference type="EMBL" id="CT573326">
    <property type="protein sequence ID" value="CAK17477.1"/>
    <property type="molecule type" value="Genomic_DNA"/>
</dbReference>
<dbReference type="RefSeq" id="WP_011535839.1">
    <property type="nucleotide sequence ID" value="NC_008027.1"/>
</dbReference>
<dbReference type="SMR" id="Q1I4F9"/>
<dbReference type="STRING" id="384676.PSEEN4821"/>
<dbReference type="KEGG" id="pen:PSEEN4821"/>
<dbReference type="eggNOG" id="COG2921">
    <property type="taxonomic scope" value="Bacteria"/>
</dbReference>
<dbReference type="HOGENOM" id="CLU_161438_1_0_6"/>
<dbReference type="OrthoDB" id="9793424at2"/>
<dbReference type="Proteomes" id="UP000000658">
    <property type="component" value="Chromosome"/>
</dbReference>
<dbReference type="GO" id="GO:0005829">
    <property type="term" value="C:cytosol"/>
    <property type="evidence" value="ECO:0007669"/>
    <property type="project" value="TreeGrafter"/>
</dbReference>
<dbReference type="Gene3D" id="3.30.70.260">
    <property type="match status" value="1"/>
</dbReference>
<dbReference type="HAMAP" id="MF_00659">
    <property type="entry name" value="UPF0250"/>
    <property type="match status" value="1"/>
</dbReference>
<dbReference type="InterPro" id="IPR007454">
    <property type="entry name" value="UPF0250_YbeD-like"/>
</dbReference>
<dbReference type="InterPro" id="IPR027471">
    <property type="entry name" value="YbeD-like_sf"/>
</dbReference>
<dbReference type="NCBIfam" id="NF001486">
    <property type="entry name" value="PRK00341.1"/>
    <property type="match status" value="1"/>
</dbReference>
<dbReference type="PANTHER" id="PTHR38036">
    <property type="entry name" value="UPF0250 PROTEIN YBED"/>
    <property type="match status" value="1"/>
</dbReference>
<dbReference type="PANTHER" id="PTHR38036:SF1">
    <property type="entry name" value="UPF0250 PROTEIN YBED"/>
    <property type="match status" value="1"/>
</dbReference>
<dbReference type="Pfam" id="PF04359">
    <property type="entry name" value="DUF493"/>
    <property type="match status" value="1"/>
</dbReference>
<dbReference type="SUPFAM" id="SSF117991">
    <property type="entry name" value="YbeD/HP0495-like"/>
    <property type="match status" value="1"/>
</dbReference>